<reference key="1">
    <citation type="journal article" date="2011" name="Proc. Natl. Acad. Sci. U.S.A.">
        <title>Genomic anatomy of Escherichia coli O157:H7 outbreaks.</title>
        <authorList>
            <person name="Eppinger M."/>
            <person name="Mammel M.K."/>
            <person name="Leclerc J.E."/>
            <person name="Ravel J."/>
            <person name="Cebula T.A."/>
        </authorList>
    </citation>
    <scope>NUCLEOTIDE SEQUENCE [LARGE SCALE GENOMIC DNA]</scope>
    <source>
        <strain>EC4115 / EHEC</strain>
    </source>
</reference>
<sequence length="109" mass="12594">MSAQPVDIQIFGRSLRVNCPPDQRDALNQAADDLNQRLQDLKERTRVTNTEQLVFIAALNISYELAQEKAKTRDYAASMEQRIRMLQQTIEQALLEQGRITEKTNQNFE</sequence>
<organism>
    <name type="scientific">Escherichia coli O157:H7 (strain EC4115 / EHEC)</name>
    <dbReference type="NCBI Taxonomy" id="444450"/>
    <lineage>
        <taxon>Bacteria</taxon>
        <taxon>Pseudomonadati</taxon>
        <taxon>Pseudomonadota</taxon>
        <taxon>Gammaproteobacteria</taxon>
        <taxon>Enterobacterales</taxon>
        <taxon>Enterobacteriaceae</taxon>
        <taxon>Escherichia</taxon>
    </lineage>
</organism>
<proteinExistence type="inferred from homology"/>
<name>ZAPA_ECO5E</name>
<evidence type="ECO:0000255" key="1">
    <source>
        <dbReference type="HAMAP-Rule" id="MF_02012"/>
    </source>
</evidence>
<comment type="function">
    <text evidence="1">Activator of cell division through the inhibition of FtsZ GTPase activity, therefore promoting FtsZ assembly into bundles of protofilaments necessary for the formation of the division Z ring. It is recruited early at mid-cell but it is not essential for cell division.</text>
</comment>
<comment type="subunit">
    <text evidence="1">Homodimer. Interacts with FtsZ.</text>
</comment>
<comment type="subcellular location">
    <subcellularLocation>
        <location evidence="1">Cytoplasm</location>
    </subcellularLocation>
    <text evidence="1">Localizes at mid-cell.</text>
</comment>
<comment type="similarity">
    <text evidence="1">Belongs to the ZapA family. Type 1 subfamily.</text>
</comment>
<accession>B5YQA4</accession>
<gene>
    <name evidence="1" type="primary">zapA</name>
    <name type="ordered locus">ECH74115_4203</name>
</gene>
<protein>
    <recommendedName>
        <fullName evidence="1">Cell division protein ZapA</fullName>
    </recommendedName>
    <alternativeName>
        <fullName evidence="1">Z ring-associated protein ZapA</fullName>
    </alternativeName>
</protein>
<feature type="chain" id="PRO_1000189509" description="Cell division protein ZapA">
    <location>
        <begin position="1"/>
        <end position="109"/>
    </location>
</feature>
<feature type="coiled-coil region" evidence="1">
    <location>
        <begin position="21"/>
        <end position="99"/>
    </location>
</feature>
<keyword id="KW-0131">Cell cycle</keyword>
<keyword id="KW-0132">Cell division</keyword>
<keyword id="KW-0175">Coiled coil</keyword>
<keyword id="KW-0963">Cytoplasm</keyword>
<keyword id="KW-0717">Septation</keyword>
<dbReference type="EMBL" id="CP001164">
    <property type="protein sequence ID" value="ACI36220.1"/>
    <property type="molecule type" value="Genomic_DNA"/>
</dbReference>
<dbReference type="RefSeq" id="WP_001276008.1">
    <property type="nucleotide sequence ID" value="NC_011353.1"/>
</dbReference>
<dbReference type="SMR" id="B5YQA4"/>
<dbReference type="GeneID" id="93779091"/>
<dbReference type="KEGG" id="ecf:ECH74115_4203"/>
<dbReference type="HOGENOM" id="CLU_116623_3_0_6"/>
<dbReference type="GO" id="GO:0032153">
    <property type="term" value="C:cell division site"/>
    <property type="evidence" value="ECO:0007669"/>
    <property type="project" value="TreeGrafter"/>
</dbReference>
<dbReference type="GO" id="GO:0030428">
    <property type="term" value="C:cell septum"/>
    <property type="evidence" value="ECO:0007669"/>
    <property type="project" value="TreeGrafter"/>
</dbReference>
<dbReference type="GO" id="GO:0005829">
    <property type="term" value="C:cytosol"/>
    <property type="evidence" value="ECO:0007669"/>
    <property type="project" value="TreeGrafter"/>
</dbReference>
<dbReference type="GO" id="GO:0005886">
    <property type="term" value="C:plasma membrane"/>
    <property type="evidence" value="ECO:0007669"/>
    <property type="project" value="UniProtKB-UniRule"/>
</dbReference>
<dbReference type="GO" id="GO:0000917">
    <property type="term" value="P:division septum assembly"/>
    <property type="evidence" value="ECO:0007669"/>
    <property type="project" value="UniProtKB-KW"/>
</dbReference>
<dbReference type="GO" id="GO:0043093">
    <property type="term" value="P:FtsZ-dependent cytokinesis"/>
    <property type="evidence" value="ECO:0007669"/>
    <property type="project" value="TreeGrafter"/>
</dbReference>
<dbReference type="GO" id="GO:0000921">
    <property type="term" value="P:septin ring assembly"/>
    <property type="evidence" value="ECO:0007669"/>
    <property type="project" value="TreeGrafter"/>
</dbReference>
<dbReference type="FunFam" id="1.20.5.50:FF:000001">
    <property type="entry name" value="Cell division protein ZapA"/>
    <property type="match status" value="1"/>
</dbReference>
<dbReference type="FunFam" id="3.30.160.880:FF:000001">
    <property type="entry name" value="Cell division protein ZapA"/>
    <property type="match status" value="1"/>
</dbReference>
<dbReference type="Gene3D" id="1.20.5.50">
    <property type="match status" value="1"/>
</dbReference>
<dbReference type="Gene3D" id="3.30.160.880">
    <property type="entry name" value="Cell division protein ZapA protomer, N-terminal domain"/>
    <property type="match status" value="1"/>
</dbReference>
<dbReference type="HAMAP" id="MF_02012">
    <property type="entry name" value="ZapA_type1"/>
    <property type="match status" value="1"/>
</dbReference>
<dbReference type="InterPro" id="IPR007838">
    <property type="entry name" value="Cell_div_ZapA-like"/>
</dbReference>
<dbReference type="InterPro" id="IPR036192">
    <property type="entry name" value="Cell_div_ZapA-like_sf"/>
</dbReference>
<dbReference type="InterPro" id="IPR023771">
    <property type="entry name" value="Cell_div_ZapA_eubact"/>
</dbReference>
<dbReference type="InterPro" id="IPR042233">
    <property type="entry name" value="Cell_div_ZapA_N"/>
</dbReference>
<dbReference type="NCBIfam" id="NF008209">
    <property type="entry name" value="PRK10972.1"/>
    <property type="match status" value="1"/>
</dbReference>
<dbReference type="PANTHER" id="PTHR34981">
    <property type="entry name" value="CELL DIVISION PROTEIN ZAPA"/>
    <property type="match status" value="1"/>
</dbReference>
<dbReference type="PANTHER" id="PTHR34981:SF1">
    <property type="entry name" value="CELL DIVISION PROTEIN ZAPA"/>
    <property type="match status" value="1"/>
</dbReference>
<dbReference type="Pfam" id="PF05164">
    <property type="entry name" value="ZapA"/>
    <property type="match status" value="1"/>
</dbReference>
<dbReference type="SUPFAM" id="SSF102829">
    <property type="entry name" value="Cell division protein ZapA-like"/>
    <property type="match status" value="1"/>
</dbReference>